<accession>O35048</accession>
<comment type="function">
    <text evidence="2">The 3-beta-HSD enzymatic system plays a crucial role in the biosynthesis of all classes of hormonal steroids. HSD VII is active against four 7-alpha-hydroxylated sterols. Does not metabolize several different C(19/21) steroids as substrates. Involved in bile acid synthesis. Plays a key role in cell positioning and movement in lymphoid tissues by mediating degradation of 7-alpha,25-dihydroxycholesterol (7-alpha,25-OHC): 7-alpha,25-OHC acts as a ligand for the G protein-coupled receptor GPR183/EBI2, a chemotactic receptor for a number of lymphoid cells.</text>
</comment>
<comment type="catalytic activity">
    <reaction evidence="3">
        <text>7alpha-hydroxycholesterol + NAD(+) = 7alpha-hydroxycholest-4-en-3-one + NADH + H(+)</text>
        <dbReference type="Rhea" id="RHEA:11896"/>
        <dbReference type="ChEBI" id="CHEBI:15378"/>
        <dbReference type="ChEBI" id="CHEBI:17500"/>
        <dbReference type="ChEBI" id="CHEBI:17899"/>
        <dbReference type="ChEBI" id="CHEBI:57540"/>
        <dbReference type="ChEBI" id="CHEBI:57945"/>
        <dbReference type="EC" id="1.1.1.181"/>
    </reaction>
    <physiologicalReaction direction="left-to-right" evidence="3">
        <dbReference type="Rhea" id="RHEA:11897"/>
    </physiologicalReaction>
</comment>
<comment type="catalytic activity">
    <reaction evidence="3">
        <text>7alpha,25-dihydroxycholesterol + NAD(+) = 7alpha,25-dihydroxy-4-cholesten-3-one + NADH + H(+)</text>
        <dbReference type="Rhea" id="RHEA:47156"/>
        <dbReference type="ChEBI" id="CHEBI:15378"/>
        <dbReference type="ChEBI" id="CHEBI:37623"/>
        <dbReference type="ChEBI" id="CHEBI:57540"/>
        <dbReference type="ChEBI" id="CHEBI:57945"/>
        <dbReference type="ChEBI" id="CHEBI:81013"/>
    </reaction>
    <physiologicalReaction direction="left-to-right" evidence="3">
        <dbReference type="Rhea" id="RHEA:47157"/>
    </physiologicalReaction>
</comment>
<comment type="catalytic activity">
    <reaction evidence="3">
        <text>(25R)-cholest-5-en-3beta,7alpha,26-triol + NAD(+) = (25R)-7alpha,26-dihydroxycholest-4-en-3-one + NADH + H(+)</text>
        <dbReference type="Rhea" id="RHEA:47180"/>
        <dbReference type="ChEBI" id="CHEBI:15378"/>
        <dbReference type="ChEBI" id="CHEBI:57540"/>
        <dbReference type="ChEBI" id="CHEBI:57945"/>
        <dbReference type="ChEBI" id="CHEBI:76592"/>
        <dbReference type="ChEBI" id="CHEBI:87476"/>
    </reaction>
    <physiologicalReaction direction="left-to-right" evidence="3">
        <dbReference type="Rhea" id="RHEA:47181"/>
    </physiologicalReaction>
</comment>
<comment type="catalytic activity">
    <reaction evidence="3">
        <text>(24S)-7alpha-dihydroxycholesterol + NAD(+) = (24S)-7alpha,24-dihydroxycholest-4-en-3-one + NADH + H(+)</text>
        <dbReference type="Rhea" id="RHEA:47200"/>
        <dbReference type="ChEBI" id="CHEBI:15378"/>
        <dbReference type="ChEBI" id="CHEBI:37640"/>
        <dbReference type="ChEBI" id="CHEBI:57540"/>
        <dbReference type="ChEBI" id="CHEBI:57945"/>
        <dbReference type="ChEBI" id="CHEBI:63838"/>
    </reaction>
    <physiologicalReaction direction="left-to-right" evidence="3">
        <dbReference type="Rhea" id="RHEA:47201"/>
    </physiologicalReaction>
</comment>
<comment type="pathway">
    <text evidence="3">Lipid metabolism; steroid biosynthesis.</text>
</comment>
<comment type="subcellular location">
    <subcellularLocation>
        <location evidence="1">Endoplasmic reticulum membrane</location>
        <topology evidence="1">Multi-pass membrane protein</topology>
    </subcellularLocation>
</comment>
<comment type="tissue specificity">
    <text evidence="5">High levels in liver and lung, moderate levels in spleen, brain, heart, kidney, jejunum and testis. Up-regulated in 3Y1 cells upon growth arrest.</text>
</comment>
<comment type="similarity">
    <text evidence="6">Belongs to the 3-beta-HSD family.</text>
</comment>
<keyword id="KW-0256">Endoplasmic reticulum</keyword>
<keyword id="KW-0443">Lipid metabolism</keyword>
<keyword id="KW-0472">Membrane</keyword>
<keyword id="KW-0520">NAD</keyword>
<keyword id="KW-0560">Oxidoreductase</keyword>
<keyword id="KW-1185">Reference proteome</keyword>
<keyword id="KW-0755">Steroidogenesis</keyword>
<keyword id="KW-0812">Transmembrane</keyword>
<keyword id="KW-1133">Transmembrane helix</keyword>
<feature type="chain" id="PRO_0000248461" description="3 beta-hydroxysteroid dehydrogenase type 7">
    <location>
        <begin position="1"/>
        <end position="338"/>
    </location>
</feature>
<feature type="transmembrane region" description="Helical" evidence="4">
    <location>
        <begin position="258"/>
        <end position="278"/>
    </location>
</feature>
<feature type="transmembrane region" description="Helical" evidence="4">
    <location>
        <begin position="280"/>
        <end position="300"/>
    </location>
</feature>
<feature type="active site" description="Proton acceptor" evidence="1">
    <location>
        <position position="159"/>
    </location>
</feature>
<feature type="binding site" evidence="1">
    <location>
        <position position="163"/>
    </location>
    <ligand>
        <name>NAD(+)</name>
        <dbReference type="ChEBI" id="CHEBI:57540"/>
    </ligand>
</feature>
<reference evidence="6 7" key="1">
    <citation type="journal article" date="1997" name="Biochim. Biophys. Acta">
        <title>Isolation of a novel cDNA whose corresponding mRNA is accumulated in growth-arrested confluent but not in growing sub-confluent rat 3Y1 cells.</title>
        <authorList>
            <person name="Hayashi Y."/>
            <person name="Kiyono T."/>
            <person name="Fujita M."/>
            <person name="Ishibashi M."/>
        </authorList>
    </citation>
    <scope>NUCLEOTIDE SEQUENCE [MRNA]</scope>
    <scope>TISSUE SPECIFICITY</scope>
</reference>
<dbReference type="EC" id="1.1.1.-"/>
<dbReference type="EC" id="1.1.1.181" evidence="3"/>
<dbReference type="EMBL" id="AB000199">
    <property type="protein sequence ID" value="BAA22931.1"/>
    <property type="molecule type" value="mRNA"/>
</dbReference>
<dbReference type="RefSeq" id="NP_647545.1">
    <property type="nucleotide sequence ID" value="NM_139329.1"/>
</dbReference>
<dbReference type="SMR" id="O35048"/>
<dbReference type="FunCoup" id="O35048">
    <property type="interactions" value="92"/>
</dbReference>
<dbReference type="STRING" id="10116.ENSRNOP00000025933"/>
<dbReference type="iPTMnet" id="O35048"/>
<dbReference type="PhosphoSitePlus" id="O35048"/>
<dbReference type="PaxDb" id="10116-ENSRNOP00000025933"/>
<dbReference type="GeneID" id="246211"/>
<dbReference type="KEGG" id="rno:246211"/>
<dbReference type="UCSC" id="RGD:628727">
    <property type="organism name" value="rat"/>
</dbReference>
<dbReference type="AGR" id="RGD:628727"/>
<dbReference type="CTD" id="80270"/>
<dbReference type="RGD" id="628727">
    <property type="gene designation" value="Hsd3b7"/>
</dbReference>
<dbReference type="eggNOG" id="KOG1430">
    <property type="taxonomic scope" value="Eukaryota"/>
</dbReference>
<dbReference type="InParanoid" id="O35048"/>
<dbReference type="Reactome" id="R-RNO-193368">
    <property type="pathway name" value="Synthesis of bile acids and bile salts via 7alpha-hydroxycholesterol"/>
</dbReference>
<dbReference type="Reactome" id="R-RNO-193775">
    <property type="pathway name" value="Synthesis of bile acids and bile salts via 24-hydroxycholesterol"/>
</dbReference>
<dbReference type="Reactome" id="R-RNO-193807">
    <property type="pathway name" value="Synthesis of bile acids and bile salts via 27-hydroxycholesterol"/>
</dbReference>
<dbReference type="UniPathway" id="UPA00062"/>
<dbReference type="PRO" id="PR:O35048"/>
<dbReference type="Proteomes" id="UP000002494">
    <property type="component" value="Unplaced"/>
</dbReference>
<dbReference type="GO" id="GO:0005789">
    <property type="term" value="C:endoplasmic reticulum membrane"/>
    <property type="evidence" value="ECO:0007669"/>
    <property type="project" value="UniProtKB-SubCell"/>
</dbReference>
<dbReference type="GO" id="GO:0047016">
    <property type="term" value="F:cholest-5-ene-3-beta,7-alpha-diol 3-beta-dehydrogenase activity"/>
    <property type="evidence" value="ECO:0000314"/>
    <property type="project" value="RGD"/>
</dbReference>
<dbReference type="GO" id="GO:0016616">
    <property type="term" value="F:oxidoreductase activity, acting on the CH-OH group of donors, NAD or NADP as acceptor"/>
    <property type="evidence" value="ECO:0000318"/>
    <property type="project" value="GO_Central"/>
</dbReference>
<dbReference type="GO" id="GO:0035754">
    <property type="term" value="P:B cell chemotaxis"/>
    <property type="evidence" value="ECO:0000250"/>
    <property type="project" value="UniProtKB"/>
</dbReference>
<dbReference type="GO" id="GO:0008206">
    <property type="term" value="P:bile acid metabolic process"/>
    <property type="evidence" value="ECO:0000304"/>
    <property type="project" value="RGD"/>
</dbReference>
<dbReference type="GO" id="GO:0006707">
    <property type="term" value="P:cholesterol catabolic process"/>
    <property type="evidence" value="ECO:0000314"/>
    <property type="project" value="RGD"/>
</dbReference>
<dbReference type="GO" id="GO:0097421">
    <property type="term" value="P:liver regeneration"/>
    <property type="evidence" value="ECO:0000270"/>
    <property type="project" value="RGD"/>
</dbReference>
<dbReference type="GO" id="GO:0001558">
    <property type="term" value="P:regulation of cell growth"/>
    <property type="evidence" value="ECO:0000314"/>
    <property type="project" value="RGD"/>
</dbReference>
<dbReference type="GO" id="GO:0006694">
    <property type="term" value="P:steroid biosynthetic process"/>
    <property type="evidence" value="ECO:0007669"/>
    <property type="project" value="UniProtKB-UniPathway"/>
</dbReference>
<dbReference type="Gene3D" id="3.40.50.720">
    <property type="entry name" value="NAD(P)-binding Rossmann-like Domain"/>
    <property type="match status" value="1"/>
</dbReference>
<dbReference type="InterPro" id="IPR002225">
    <property type="entry name" value="3Beta_OHSteriod_DH/Estase"/>
</dbReference>
<dbReference type="InterPro" id="IPR036291">
    <property type="entry name" value="NAD(P)-bd_dom_sf"/>
</dbReference>
<dbReference type="InterPro" id="IPR050425">
    <property type="entry name" value="NAD(P)_dehydrat-like"/>
</dbReference>
<dbReference type="PANTHER" id="PTHR10366:SF847">
    <property type="entry name" value="3 BETA-HYDROXYSTEROID DEHYDROGENASE TYPE 7"/>
    <property type="match status" value="1"/>
</dbReference>
<dbReference type="PANTHER" id="PTHR10366">
    <property type="entry name" value="NAD DEPENDENT EPIMERASE/DEHYDRATASE"/>
    <property type="match status" value="1"/>
</dbReference>
<dbReference type="Pfam" id="PF01073">
    <property type="entry name" value="3Beta_HSD"/>
    <property type="match status" value="1"/>
</dbReference>
<dbReference type="SUPFAM" id="SSF51735">
    <property type="entry name" value="NAD(P)-binding Rossmann-fold domains"/>
    <property type="match status" value="1"/>
</dbReference>
<proteinExistence type="evidence at transcript level"/>
<sequence>MADSAQVPALVYLVTGGCGFLGEHIVRMLLEWEPRLRELRVFDLHLSSWLEELKTGPVQVTAIQGDVTQAHEVAAAMAGSHVVIHTAGLVDVFGKASPETIHKVNVQGTQNVIDACVQTGTRLLVYTSSMEVVGPNVKGHPFYRGNEDTPYEAIHRHPYPCSKALAEQLVLEANGRKGLRFGGRLFRAIPASVEHGRVYVGNVAWMHILVARELEQRAALMGGQVYFCYDKSPYKSYEDFNMEFLSPCGLRLIGTHPLLPYWLLVLLTALNALLQWLLRPLVLYTPLLNPYTLAVANTTFTVSTNKAQRHFGYKPLFSWEESRARTIHWVQAMEGSAW</sequence>
<organism>
    <name type="scientific">Rattus norvegicus</name>
    <name type="common">Rat</name>
    <dbReference type="NCBI Taxonomy" id="10116"/>
    <lineage>
        <taxon>Eukaryota</taxon>
        <taxon>Metazoa</taxon>
        <taxon>Chordata</taxon>
        <taxon>Craniata</taxon>
        <taxon>Vertebrata</taxon>
        <taxon>Euteleostomi</taxon>
        <taxon>Mammalia</taxon>
        <taxon>Eutheria</taxon>
        <taxon>Euarchontoglires</taxon>
        <taxon>Glires</taxon>
        <taxon>Rodentia</taxon>
        <taxon>Myomorpha</taxon>
        <taxon>Muroidea</taxon>
        <taxon>Muridae</taxon>
        <taxon>Murinae</taxon>
        <taxon>Rattus</taxon>
    </lineage>
</organism>
<gene>
    <name evidence="8" type="primary">Hsd3b7</name>
    <name evidence="7" type="synonym">Cca2</name>
</gene>
<name>3BHS7_RAT</name>
<protein>
    <recommendedName>
        <fullName evidence="6">3 beta-hydroxysteroid dehydrogenase type 7</fullName>
    </recommendedName>
    <alternativeName>
        <fullName>3 beta-hydroxysteroid dehydrogenase type VII</fullName>
        <shortName>3-beta-HSD VII</shortName>
    </alternativeName>
    <alternativeName>
        <fullName>3-beta-hydroxy-Delta(5)-C27 steroid oxidoreductase</fullName>
        <shortName>C(27) 3-beta-HSD</shortName>
        <ecNumber>1.1.1.-</ecNumber>
    </alternativeName>
    <alternativeName>
        <fullName>Cholest-5-ene-3-beta,7-alpha-diol 3-beta-dehydrogenase</fullName>
        <ecNumber evidence="3">1.1.1.181</ecNumber>
    </alternativeName>
    <alternativeName>
        <fullName>Confluent 3Y1 cell-associated 2</fullName>
    </alternativeName>
</protein>
<evidence type="ECO:0000250" key="1"/>
<evidence type="ECO:0000250" key="2">
    <source>
        <dbReference type="UniProtKB" id="Q9EQC1"/>
    </source>
</evidence>
<evidence type="ECO:0000250" key="3">
    <source>
        <dbReference type="UniProtKB" id="Q9H2F3"/>
    </source>
</evidence>
<evidence type="ECO:0000255" key="4"/>
<evidence type="ECO:0000269" key="5">
    <source>
    </source>
</evidence>
<evidence type="ECO:0000305" key="6"/>
<evidence type="ECO:0000312" key="7">
    <source>
        <dbReference type="EMBL" id="BAA22931.1"/>
    </source>
</evidence>
<evidence type="ECO:0000312" key="8">
    <source>
        <dbReference type="RGD" id="628727"/>
    </source>
</evidence>